<organism>
    <name type="scientific">Dicotyles tajacu</name>
    <name type="common">Collared peccary</name>
    <name type="synonym">Pecari tajacu</name>
    <dbReference type="NCBI Taxonomy" id="9829"/>
    <lineage>
        <taxon>Eukaryota</taxon>
        <taxon>Metazoa</taxon>
        <taxon>Chordata</taxon>
        <taxon>Craniata</taxon>
        <taxon>Vertebrata</taxon>
        <taxon>Euteleostomi</taxon>
        <taxon>Mammalia</taxon>
        <taxon>Eutheria</taxon>
        <taxon>Laurasiatheria</taxon>
        <taxon>Artiodactyla</taxon>
        <taxon>Suina</taxon>
        <taxon>Tayassuidae</taxon>
        <taxon>Dicotyles</taxon>
    </lineage>
</organism>
<gene>
    <name type="primary">CSN3</name>
    <name type="synonym">CSN10</name>
    <name type="synonym">CSNK</name>
</gene>
<accession>Q28794</accession>
<dbReference type="EMBL" id="U53891">
    <property type="protein sequence ID" value="AAB08416.1"/>
    <property type="molecule type" value="Genomic_DNA"/>
</dbReference>
<dbReference type="GlyCosmos" id="Q28794">
    <property type="glycosylation" value="3 sites, No reported glycans"/>
</dbReference>
<dbReference type="GO" id="GO:0005615">
    <property type="term" value="C:extracellular space"/>
    <property type="evidence" value="ECO:0007669"/>
    <property type="project" value="TreeGrafter"/>
</dbReference>
<dbReference type="GO" id="GO:0007595">
    <property type="term" value="P:lactation"/>
    <property type="evidence" value="ECO:0007669"/>
    <property type="project" value="TreeGrafter"/>
</dbReference>
<dbReference type="GO" id="GO:0050821">
    <property type="term" value="P:protein stabilization"/>
    <property type="evidence" value="ECO:0007669"/>
    <property type="project" value="TreeGrafter"/>
</dbReference>
<dbReference type="InterPro" id="IPR000117">
    <property type="entry name" value="Casein_kappa"/>
</dbReference>
<dbReference type="PANTHER" id="PTHR11470">
    <property type="entry name" value="KAPPA CASEIN"/>
    <property type="match status" value="1"/>
</dbReference>
<dbReference type="PANTHER" id="PTHR11470:SF2">
    <property type="entry name" value="KAPPA-CASEIN"/>
    <property type="match status" value="1"/>
</dbReference>
<dbReference type="Pfam" id="PF00997">
    <property type="entry name" value="Casein_kappa"/>
    <property type="match status" value="1"/>
</dbReference>
<comment type="function">
    <text>Kappa-casein stabilizes micelle formation, preventing casein precipitation in milk.</text>
</comment>
<comment type="subcellular location">
    <subcellularLocation>
        <location>Secreted</location>
    </subcellularLocation>
</comment>
<comment type="tissue specificity">
    <text>Mammary gland specific. Secreted in milk.</text>
</comment>
<comment type="similarity">
    <text evidence="4">Belongs to the kappa-casein family.</text>
</comment>
<proteinExistence type="evidence at transcript level"/>
<evidence type="ECO:0000250" key="1"/>
<evidence type="ECO:0000250" key="2">
    <source>
        <dbReference type="UniProtKB" id="P02668"/>
    </source>
</evidence>
<evidence type="ECO:0000250" key="3">
    <source>
        <dbReference type="UniProtKB" id="P02670"/>
    </source>
</evidence>
<evidence type="ECO:0000305" key="4"/>
<reference key="1">
    <citation type="journal article" date="1996" name="Mol. Biol. Evol.">
        <title>Evidence from milk casein genes that cetaceans are close relatives of hippopotamid artiodactyls.</title>
        <authorList>
            <person name="Gatesy J."/>
            <person name="Hayashi C."/>
            <person name="Cronin M.A."/>
            <person name="Arctander P."/>
        </authorList>
    </citation>
    <scope>NUCLEOTIDE SEQUENCE [GENOMIC DNA]</scope>
</reference>
<keyword id="KW-0325">Glycoprotein</keyword>
<keyword id="KW-0494">Milk protein</keyword>
<keyword id="KW-0597">Phosphoprotein</keyword>
<keyword id="KW-0964">Secreted</keyword>
<feature type="chain" id="PRO_0000144121" description="Kappa-casein">
    <location>
        <begin position="1" status="less than"/>
        <end position="146"/>
    </location>
</feature>
<feature type="site" description="Cleavage; by chymosin/rennin" evidence="1">
    <location>
        <begin position="80"/>
        <end position="81"/>
    </location>
</feature>
<feature type="modified residue" description="Phosphoserine" evidence="3">
    <location>
        <position position="143"/>
    </location>
</feature>
<feature type="glycosylation site" description="O-linked (GalNAc...) threonine" evidence="2">
    <location>
        <position position="107"/>
    </location>
</feature>
<feature type="glycosylation site" description="O-linked (GalNAc...) threonine" evidence="2">
    <location>
        <position position="112"/>
    </location>
</feature>
<feature type="glycosylation site" description="O-linked (GalNAc...) threonine" evidence="2">
    <location>
        <position position="118"/>
    </location>
</feature>
<feature type="non-terminal residue">
    <location>
        <position position="1"/>
    </location>
</feature>
<name>CASK_DICTA</name>
<protein>
    <recommendedName>
        <fullName>Kappa-casein</fullName>
    </recommendedName>
</protein>
<sequence>LFNEERFRSIPIHYRLNRIPSYGFIFYQHRSAASTNNQFIPYPFYARPVAVRPHAQKPQWQDQPNVYPPTGARRPRPHASFIAIPPKKNQDTTAIPAINSIATVEPTLIPTTEPVVNTVVIPEAASEFLITNTPETTAVQVSSTVV</sequence>